<dbReference type="EC" id="3.4.21.-" evidence="1"/>
<dbReference type="EMBL" id="AF318069">
    <property type="protein sequence ID" value="AAG53680.1"/>
    <property type="molecule type" value="Genomic_DNA"/>
</dbReference>
<dbReference type="EMBL" id="CP001037">
    <property type="protein sequence ID" value="ACC80391.1"/>
    <property type="molecule type" value="Genomic_DNA"/>
</dbReference>
<dbReference type="RefSeq" id="WP_012408409.1">
    <property type="nucleotide sequence ID" value="NC_010628.1"/>
</dbReference>
<dbReference type="SMR" id="Q9AH77"/>
<dbReference type="STRING" id="63737.Npun_R1722"/>
<dbReference type="MEROPS" id="S48.001"/>
<dbReference type="DNASU" id="6251161"/>
<dbReference type="EnsemblBacteria" id="ACC80391">
    <property type="protein sequence ID" value="ACC80391"/>
    <property type="gene ID" value="Npun_R1722"/>
</dbReference>
<dbReference type="KEGG" id="npu:Npun_R1722"/>
<dbReference type="eggNOG" id="ENOG502Z96Q">
    <property type="taxonomic scope" value="Bacteria"/>
</dbReference>
<dbReference type="HOGENOM" id="CLU_926376_0_0_3"/>
<dbReference type="OrthoDB" id="526832at2"/>
<dbReference type="PhylomeDB" id="Q9AH77"/>
<dbReference type="Proteomes" id="UP000001191">
    <property type="component" value="Chromosome"/>
</dbReference>
<dbReference type="GO" id="GO:0003677">
    <property type="term" value="F:DNA binding"/>
    <property type="evidence" value="ECO:0007669"/>
    <property type="project" value="UniProtKB-UniRule"/>
</dbReference>
<dbReference type="GO" id="GO:0004252">
    <property type="term" value="F:serine-type endopeptidase activity"/>
    <property type="evidence" value="ECO:0007669"/>
    <property type="project" value="UniProtKB-UniRule"/>
</dbReference>
<dbReference type="GO" id="GO:0043158">
    <property type="term" value="P:heterocyst development"/>
    <property type="evidence" value="ECO:0007669"/>
    <property type="project" value="UniProtKB-UniRule"/>
</dbReference>
<dbReference type="GO" id="GO:0006508">
    <property type="term" value="P:proteolysis"/>
    <property type="evidence" value="ECO:0007669"/>
    <property type="project" value="UniProtKB-KW"/>
</dbReference>
<dbReference type="Gene3D" id="6.10.250.2740">
    <property type="match status" value="1"/>
</dbReference>
<dbReference type="Gene3D" id="1.10.10.1670">
    <property type="entry name" value="HetR, flap domain"/>
    <property type="match status" value="1"/>
</dbReference>
<dbReference type="Gene3D" id="1.10.10.1680">
    <property type="entry name" value="HetR, N-terminal DNA-binding domain"/>
    <property type="match status" value="1"/>
</dbReference>
<dbReference type="HAMAP" id="MF_00781">
    <property type="entry name" value="HetR"/>
    <property type="match status" value="1"/>
</dbReference>
<dbReference type="InterPro" id="IPR040949">
    <property type="entry name" value="HetR_C"/>
</dbReference>
<dbReference type="InterPro" id="IPR041936">
    <property type="entry name" value="HetR_DNA-bd_N"/>
</dbReference>
<dbReference type="InterPro" id="IPR041935">
    <property type="entry name" value="HetR_flap"/>
</dbReference>
<dbReference type="InterPro" id="IPR005319">
    <property type="entry name" value="Pept_S48_HetR"/>
</dbReference>
<dbReference type="NCBIfam" id="NF009718">
    <property type="entry name" value="PRK13245.1"/>
    <property type="match status" value="1"/>
</dbReference>
<dbReference type="Pfam" id="PF18460">
    <property type="entry name" value="HetR_C"/>
    <property type="match status" value="1"/>
</dbReference>
<dbReference type="Pfam" id="PF03574">
    <property type="entry name" value="Peptidase_S48"/>
    <property type="match status" value="1"/>
</dbReference>
<name>HETR_NOSP7</name>
<accession>Q9AH77</accession>
<accession>B2J1N0</accession>
<feature type="chain" id="PRO_0000208480" description="DNA-binding transcriptional activator HetR">
    <location>
        <begin position="1"/>
        <end position="299"/>
    </location>
</feature>
<feature type="active site" evidence="1">
    <location>
        <position position="152"/>
    </location>
</feature>
<feature type="disulfide bond" description="Interchain" evidence="1">
    <location>
        <position position="48"/>
    </location>
</feature>
<keyword id="KW-0010">Activator</keyword>
<keyword id="KW-1015">Disulfide bond</keyword>
<keyword id="KW-0238">DNA-binding</keyword>
<keyword id="KW-0364">Heterocyst</keyword>
<keyword id="KW-0378">Hydrolase</keyword>
<keyword id="KW-0645">Protease</keyword>
<keyword id="KW-1185">Reference proteome</keyword>
<keyword id="KW-0720">Serine protease</keyword>
<keyword id="KW-0804">Transcription</keyword>
<keyword id="KW-0805">Transcription regulation</keyword>
<protein>
    <recommendedName>
        <fullName evidence="1">DNA-binding transcriptional activator HetR</fullName>
        <ecNumber evidence="1">3.4.21.-</ecNumber>
    </recommendedName>
    <alternativeName>
        <fullName evidence="1 3">Heterocyst differentiation control protein</fullName>
    </alternativeName>
</protein>
<evidence type="ECO:0000255" key="1">
    <source>
        <dbReference type="HAMAP-Rule" id="MF_00781"/>
    </source>
</evidence>
<evidence type="ECO:0000269" key="2">
    <source>
    </source>
</evidence>
<evidence type="ECO:0000303" key="3">
    <source>
    </source>
</evidence>
<organism>
    <name type="scientific">Nostoc punctiforme (strain ATCC 29133 / PCC 73102)</name>
    <dbReference type="NCBI Taxonomy" id="63737"/>
    <lineage>
        <taxon>Bacteria</taxon>
        <taxon>Bacillati</taxon>
        <taxon>Cyanobacteriota</taxon>
        <taxon>Cyanophyceae</taxon>
        <taxon>Nostocales</taxon>
        <taxon>Nostocaceae</taxon>
        <taxon>Nostoc</taxon>
    </lineage>
</organism>
<comment type="function">
    <text evidence="1 2">Controls heterocyst differentiation. Dimerization is required for DNA-binding. Has both a protease and a DNA-binding activity (By similarity). Increased expression leads to more heterocysts than usual (PubMed:11274126).</text>
</comment>
<comment type="subunit">
    <text evidence="1">Homodimer; disulfide-linked.</text>
</comment>
<comment type="developmental stage">
    <text evidence="2">Accumulates in heterocysts (at protein level).</text>
</comment>
<comment type="induction">
    <text evidence="2">By nitrogen deficiency. Transcription increases 3-6 hours after nitrogen reduction, peaks at 12 hours and declines slowly after. Under control of both nctA and hetF.</text>
</comment>
<comment type="disruption phenotype">
    <text evidence="2">Unable to differentiate heterocysts.</text>
</comment>
<comment type="similarity">
    <text evidence="1">Belongs to the peptidase S48 family.</text>
</comment>
<sequence>MSNDIDLIKRLDPSAMDQIMLYLAFSAMRTSGHRHGAFLDAAATAAKCAIYMTYLEQGQNLRMTGHLHHLEPKRVKIIVEEVRQALTEGKLLKMLGSQEPRYLIQLPYVWLEKYPWQPGRSRVPGTSLTSEEKRQIEQKLPSNLPDAQLVSSFEFLDLIEFLHRRSQEDLPTEHQMPLSEALGEHIKRRLLYSGTVTRIDSPWGMPFYALTRPFYAPADDQERTYIMVEDTARYFRMMKNWAERRRNAMRLLEELDILPEKMEQAMEELDEIIRAWADKYHQDGGIAVVLQTVFGEKED</sequence>
<reference key="1">
    <citation type="journal article" date="2001" name="J. Bacteriol.">
        <title>The hetF gene product is essential to heterocyst differentiation and affects hetR function in the cyanobacterium Nostoc punctiforme.</title>
        <authorList>
            <person name="Wong F.C.Y."/>
            <person name="Meeks J.C."/>
        </authorList>
    </citation>
    <scope>NUCLEOTIDE SEQUENCE [GENOMIC DNA]</scope>
    <scope>FUNCTION</scope>
    <scope>DEVELOPMENTAL STAGE</scope>
    <scope>INDUCTION BY NITROGEN LIMITATION</scope>
    <scope>DISRUPTION PHENOTYPE</scope>
    <source>
        <strain>ATCC 29133 / PCC 73102</strain>
    </source>
</reference>
<reference key="2">
    <citation type="journal article" date="2013" name="Plant Physiol.">
        <title>A Nostoc punctiforme Sugar Transporter Necessary to Establish a Cyanobacterium-Plant Symbiosis.</title>
        <authorList>
            <person name="Ekman M."/>
            <person name="Picossi S."/>
            <person name="Campbell E.L."/>
            <person name="Meeks J.C."/>
            <person name="Flores E."/>
        </authorList>
    </citation>
    <scope>NUCLEOTIDE SEQUENCE [LARGE SCALE GENOMIC DNA]</scope>
    <source>
        <strain>ATCC 29133 / PCC 73102</strain>
    </source>
</reference>
<gene>
    <name evidence="1 3" type="primary">hetR</name>
    <name type="ordered locus">Npun_R1722</name>
</gene>
<proteinExistence type="evidence at protein level"/>